<comment type="subcellular location">
    <subcellularLocation>
        <location evidence="1">Secreted</location>
    </subcellularLocation>
</comment>
<comment type="similarity">
    <text evidence="3">Belongs to the DEFL family.</text>
</comment>
<comment type="caution">
    <text evidence="3">Lacks 1 of the 4 disulfide bonds, which are conserved features of the family.</text>
</comment>
<organism>
    <name type="scientific">Arabidopsis thaliana</name>
    <name type="common">Mouse-ear cress</name>
    <dbReference type="NCBI Taxonomy" id="3702"/>
    <lineage>
        <taxon>Eukaryota</taxon>
        <taxon>Viridiplantae</taxon>
        <taxon>Streptophyta</taxon>
        <taxon>Embryophyta</taxon>
        <taxon>Tracheophyta</taxon>
        <taxon>Spermatophyta</taxon>
        <taxon>Magnoliopsida</taxon>
        <taxon>eudicotyledons</taxon>
        <taxon>Gunneridae</taxon>
        <taxon>Pentapetalae</taxon>
        <taxon>rosids</taxon>
        <taxon>malvids</taxon>
        <taxon>Brassicales</taxon>
        <taxon>Brassicaceae</taxon>
        <taxon>Camelineae</taxon>
        <taxon>Arabidopsis</taxon>
    </lineage>
</organism>
<dbReference type="EMBL" id="AF128396">
    <property type="status" value="NOT_ANNOTATED_CDS"/>
    <property type="molecule type" value="Genomic_DNA"/>
</dbReference>
<dbReference type="EMBL" id="AL161513">
    <property type="status" value="NOT_ANNOTATED_CDS"/>
    <property type="molecule type" value="Genomic_DNA"/>
</dbReference>
<dbReference type="EMBL" id="CP002687">
    <property type="protein sequence ID" value="AEE82690.1"/>
    <property type="molecule type" value="Genomic_DNA"/>
</dbReference>
<dbReference type="RefSeq" id="NP_001031603.1">
    <property type="nucleotide sequence ID" value="NM_001036526.2"/>
</dbReference>
<dbReference type="SMR" id="Q2V3K2"/>
<dbReference type="STRING" id="3702.Q2V3K2"/>
<dbReference type="PaxDb" id="3702-AT4G08875.1"/>
<dbReference type="EnsemblPlants" id="AT4G08875.1">
    <property type="protein sequence ID" value="AT4G08875.1"/>
    <property type="gene ID" value="AT4G08875"/>
</dbReference>
<dbReference type="GeneID" id="3770076"/>
<dbReference type="Gramene" id="AT4G08875.1">
    <property type="protein sequence ID" value="AT4G08875.1"/>
    <property type="gene ID" value="AT4G08875"/>
</dbReference>
<dbReference type="KEGG" id="ath:AT4G08875"/>
<dbReference type="Araport" id="AT4G08875"/>
<dbReference type="TAIR" id="AT4G08875">
    <property type="gene designation" value="LURE1.8"/>
</dbReference>
<dbReference type="HOGENOM" id="CLU_180309_0_0_1"/>
<dbReference type="InParanoid" id="Q2V3K2"/>
<dbReference type="OMA" id="CRCTISK"/>
<dbReference type="PhylomeDB" id="Q2V3K2"/>
<dbReference type="PRO" id="PR:Q2V3K2"/>
<dbReference type="Proteomes" id="UP000006548">
    <property type="component" value="Chromosome 4"/>
</dbReference>
<dbReference type="ExpressionAtlas" id="Q2V3K2">
    <property type="expression patterns" value="baseline"/>
</dbReference>
<dbReference type="GO" id="GO:0005576">
    <property type="term" value="C:extracellular region"/>
    <property type="evidence" value="ECO:0007669"/>
    <property type="project" value="UniProtKB-SubCell"/>
</dbReference>
<dbReference type="GO" id="GO:0043680">
    <property type="term" value="C:filiform apparatus"/>
    <property type="evidence" value="ECO:0000314"/>
    <property type="project" value="TAIR"/>
</dbReference>
<dbReference type="GO" id="GO:0050832">
    <property type="term" value="P:defense response to fungus"/>
    <property type="evidence" value="ECO:0007669"/>
    <property type="project" value="UniProtKB-KW"/>
</dbReference>
<dbReference type="GO" id="GO:0031640">
    <property type="term" value="P:killing of cells of another organism"/>
    <property type="evidence" value="ECO:0007669"/>
    <property type="project" value="UniProtKB-KW"/>
</dbReference>
<dbReference type="GO" id="GO:0010183">
    <property type="term" value="P:pollen tube guidance"/>
    <property type="evidence" value="ECO:0000314"/>
    <property type="project" value="TAIR"/>
</dbReference>
<protein>
    <recommendedName>
        <fullName>Defensin-like protein 209</fullName>
    </recommendedName>
</protein>
<feature type="signal peptide" evidence="2">
    <location>
        <begin position="1"/>
        <end position="19"/>
    </location>
</feature>
<feature type="chain" id="PRO_0000379701" description="Defensin-like protein 209">
    <location>
        <begin position="20"/>
        <end position="93"/>
    </location>
</feature>
<feature type="disulfide bond" evidence="1">
    <location>
        <begin position="63"/>
        <end position="80"/>
    </location>
</feature>
<feature type="disulfide bond" evidence="1">
    <location>
        <begin position="66"/>
        <end position="85"/>
    </location>
</feature>
<feature type="disulfide bond" evidence="1">
    <location>
        <begin position="70"/>
        <end position="87"/>
    </location>
</feature>
<sequence>MKITILFLTLLVLSSSCTSIITKTMNSKETIYLDNPAVSPSIDQNLVDIHLGHSFVQGVMSFCYDCGKACFRRGKNLARCQKFVCRCTISKLR</sequence>
<accession>Q2V3K2</accession>
<reference key="1">
    <citation type="journal article" date="1999" name="Nature">
        <title>Sequence and analysis of chromosome 4 of the plant Arabidopsis thaliana.</title>
        <authorList>
            <person name="Mayer K.F.X."/>
            <person name="Schueller C."/>
            <person name="Wambutt R."/>
            <person name="Murphy G."/>
            <person name="Volckaert G."/>
            <person name="Pohl T."/>
            <person name="Duesterhoeft A."/>
            <person name="Stiekema W."/>
            <person name="Entian K.-D."/>
            <person name="Terryn N."/>
            <person name="Harris B."/>
            <person name="Ansorge W."/>
            <person name="Brandt P."/>
            <person name="Grivell L.A."/>
            <person name="Rieger M."/>
            <person name="Weichselgartner M."/>
            <person name="de Simone V."/>
            <person name="Obermaier B."/>
            <person name="Mache R."/>
            <person name="Mueller M."/>
            <person name="Kreis M."/>
            <person name="Delseny M."/>
            <person name="Puigdomenech P."/>
            <person name="Watson M."/>
            <person name="Schmidtheini T."/>
            <person name="Reichert B."/>
            <person name="Portetelle D."/>
            <person name="Perez-Alonso M."/>
            <person name="Boutry M."/>
            <person name="Bancroft I."/>
            <person name="Vos P."/>
            <person name="Hoheisel J."/>
            <person name="Zimmermann W."/>
            <person name="Wedler H."/>
            <person name="Ridley P."/>
            <person name="Langham S.-A."/>
            <person name="McCullagh B."/>
            <person name="Bilham L."/>
            <person name="Robben J."/>
            <person name="van der Schueren J."/>
            <person name="Grymonprez B."/>
            <person name="Chuang Y.-J."/>
            <person name="Vandenbussche F."/>
            <person name="Braeken M."/>
            <person name="Weltjens I."/>
            <person name="Voet M."/>
            <person name="Bastiaens I."/>
            <person name="Aert R."/>
            <person name="Defoor E."/>
            <person name="Weitzenegger T."/>
            <person name="Bothe G."/>
            <person name="Ramsperger U."/>
            <person name="Hilbert H."/>
            <person name="Braun M."/>
            <person name="Holzer E."/>
            <person name="Brandt A."/>
            <person name="Peters S."/>
            <person name="van Staveren M."/>
            <person name="Dirkse W."/>
            <person name="Mooijman P."/>
            <person name="Klein Lankhorst R."/>
            <person name="Rose M."/>
            <person name="Hauf J."/>
            <person name="Koetter P."/>
            <person name="Berneiser S."/>
            <person name="Hempel S."/>
            <person name="Feldpausch M."/>
            <person name="Lamberth S."/>
            <person name="Van den Daele H."/>
            <person name="De Keyser A."/>
            <person name="Buysshaert C."/>
            <person name="Gielen J."/>
            <person name="Villarroel R."/>
            <person name="De Clercq R."/>
            <person name="van Montagu M."/>
            <person name="Rogers J."/>
            <person name="Cronin A."/>
            <person name="Quail M.A."/>
            <person name="Bray-Allen S."/>
            <person name="Clark L."/>
            <person name="Doggett J."/>
            <person name="Hall S."/>
            <person name="Kay M."/>
            <person name="Lennard N."/>
            <person name="McLay K."/>
            <person name="Mayes R."/>
            <person name="Pettett A."/>
            <person name="Rajandream M.A."/>
            <person name="Lyne M."/>
            <person name="Benes V."/>
            <person name="Rechmann S."/>
            <person name="Borkova D."/>
            <person name="Bloecker H."/>
            <person name="Scharfe M."/>
            <person name="Grimm M."/>
            <person name="Loehnert T.-H."/>
            <person name="Dose S."/>
            <person name="de Haan M."/>
            <person name="Maarse A.C."/>
            <person name="Schaefer M."/>
            <person name="Mueller-Auer S."/>
            <person name="Gabel C."/>
            <person name="Fuchs M."/>
            <person name="Fartmann B."/>
            <person name="Granderath K."/>
            <person name="Dauner D."/>
            <person name="Herzl A."/>
            <person name="Neumann S."/>
            <person name="Argiriou A."/>
            <person name="Vitale D."/>
            <person name="Liguori R."/>
            <person name="Piravandi E."/>
            <person name="Massenet O."/>
            <person name="Quigley F."/>
            <person name="Clabauld G."/>
            <person name="Muendlein A."/>
            <person name="Felber R."/>
            <person name="Schnabl S."/>
            <person name="Hiller R."/>
            <person name="Schmidt W."/>
            <person name="Lecharny A."/>
            <person name="Aubourg S."/>
            <person name="Chefdor F."/>
            <person name="Cooke R."/>
            <person name="Berger C."/>
            <person name="Monfort A."/>
            <person name="Casacuberta E."/>
            <person name="Gibbons T."/>
            <person name="Weber N."/>
            <person name="Vandenbol M."/>
            <person name="Bargues M."/>
            <person name="Terol J."/>
            <person name="Torres A."/>
            <person name="Perez-Perez A."/>
            <person name="Purnelle B."/>
            <person name="Bent E."/>
            <person name="Johnson S."/>
            <person name="Tacon D."/>
            <person name="Jesse T."/>
            <person name="Heijnen L."/>
            <person name="Schwarz S."/>
            <person name="Scholler P."/>
            <person name="Heber S."/>
            <person name="Francs P."/>
            <person name="Bielke C."/>
            <person name="Frishman D."/>
            <person name="Haase D."/>
            <person name="Lemcke K."/>
            <person name="Mewes H.-W."/>
            <person name="Stocker S."/>
            <person name="Zaccaria P."/>
            <person name="Bevan M."/>
            <person name="Wilson R.K."/>
            <person name="de la Bastide M."/>
            <person name="Habermann K."/>
            <person name="Parnell L."/>
            <person name="Dedhia N."/>
            <person name="Gnoj L."/>
            <person name="Schutz K."/>
            <person name="Huang E."/>
            <person name="Spiegel L."/>
            <person name="Sekhon M."/>
            <person name="Murray J."/>
            <person name="Sheet P."/>
            <person name="Cordes M."/>
            <person name="Abu-Threideh J."/>
            <person name="Stoneking T."/>
            <person name="Kalicki J."/>
            <person name="Graves T."/>
            <person name="Harmon G."/>
            <person name="Edwards J."/>
            <person name="Latreille P."/>
            <person name="Courtney L."/>
            <person name="Cloud J."/>
            <person name="Abbott A."/>
            <person name="Scott K."/>
            <person name="Johnson D."/>
            <person name="Minx P."/>
            <person name="Bentley D."/>
            <person name="Fulton B."/>
            <person name="Miller N."/>
            <person name="Greco T."/>
            <person name="Kemp K."/>
            <person name="Kramer J."/>
            <person name="Fulton L."/>
            <person name="Mardis E."/>
            <person name="Dante M."/>
            <person name="Pepin K."/>
            <person name="Hillier L.W."/>
            <person name="Nelson J."/>
            <person name="Spieth J."/>
            <person name="Ryan E."/>
            <person name="Andrews S."/>
            <person name="Geisel C."/>
            <person name="Layman D."/>
            <person name="Du H."/>
            <person name="Ali J."/>
            <person name="Berghoff A."/>
            <person name="Jones K."/>
            <person name="Drone K."/>
            <person name="Cotton M."/>
            <person name="Joshu C."/>
            <person name="Antonoiu B."/>
            <person name="Zidanic M."/>
            <person name="Strong C."/>
            <person name="Sun H."/>
            <person name="Lamar B."/>
            <person name="Yordan C."/>
            <person name="Ma P."/>
            <person name="Zhong J."/>
            <person name="Preston R."/>
            <person name="Vil D."/>
            <person name="Shekher M."/>
            <person name="Matero A."/>
            <person name="Shah R."/>
            <person name="Swaby I.K."/>
            <person name="O'Shaughnessy A."/>
            <person name="Rodriguez M."/>
            <person name="Hoffman J."/>
            <person name="Till S."/>
            <person name="Granat S."/>
            <person name="Shohdy N."/>
            <person name="Hasegawa A."/>
            <person name="Hameed A."/>
            <person name="Lodhi M."/>
            <person name="Johnson A."/>
            <person name="Chen E."/>
            <person name="Marra M.A."/>
            <person name="Martienssen R."/>
            <person name="McCombie W.R."/>
        </authorList>
    </citation>
    <scope>NUCLEOTIDE SEQUENCE [LARGE SCALE GENOMIC DNA]</scope>
    <source>
        <strain>cv. Columbia</strain>
    </source>
</reference>
<reference key="2">
    <citation type="journal article" date="2017" name="Plant J.">
        <title>Araport11: a complete reannotation of the Arabidopsis thaliana reference genome.</title>
        <authorList>
            <person name="Cheng C.Y."/>
            <person name="Krishnakumar V."/>
            <person name="Chan A.P."/>
            <person name="Thibaud-Nissen F."/>
            <person name="Schobel S."/>
            <person name="Town C.D."/>
        </authorList>
    </citation>
    <scope>GENOME REANNOTATION</scope>
    <source>
        <strain>cv. Columbia</strain>
    </source>
</reference>
<reference key="3">
    <citation type="journal article" date="2005" name="Plant Physiol.">
        <title>Genome organization of more than 300 defensin-like genes in Arabidopsis.</title>
        <authorList>
            <person name="Silverstein K.A.T."/>
            <person name="Graham M.A."/>
            <person name="Paape T.D."/>
            <person name="VandenBosch K.A."/>
        </authorList>
    </citation>
    <scope>GENE FAMILY</scope>
</reference>
<keyword id="KW-0929">Antimicrobial</keyword>
<keyword id="KW-1015">Disulfide bond</keyword>
<keyword id="KW-0295">Fungicide</keyword>
<keyword id="KW-0611">Plant defense</keyword>
<keyword id="KW-1185">Reference proteome</keyword>
<keyword id="KW-0964">Secreted</keyword>
<keyword id="KW-0732">Signal</keyword>
<name>DF209_ARATH</name>
<proteinExistence type="evidence at transcript level"/>
<gene>
    <name type="ordered locus">At4g08875</name>
    <name type="ORF">T3H13</name>
</gene>
<evidence type="ECO:0000250" key="1"/>
<evidence type="ECO:0000255" key="2"/>
<evidence type="ECO:0000305" key="3"/>